<dbReference type="EC" id="3.1.2.6" evidence="1"/>
<dbReference type="EMBL" id="CP000050">
    <property type="protein sequence ID" value="AAY50302.1"/>
    <property type="molecule type" value="Genomic_DNA"/>
</dbReference>
<dbReference type="RefSeq" id="WP_011036190.1">
    <property type="nucleotide sequence ID" value="NZ_CP155948.1"/>
</dbReference>
<dbReference type="SMR" id="Q4URM1"/>
<dbReference type="KEGG" id="xcb:XC_3258"/>
<dbReference type="HOGENOM" id="CLU_030571_4_1_6"/>
<dbReference type="UniPathway" id="UPA00619">
    <property type="reaction ID" value="UER00676"/>
</dbReference>
<dbReference type="Proteomes" id="UP000000420">
    <property type="component" value="Chromosome"/>
</dbReference>
<dbReference type="GO" id="GO:0004416">
    <property type="term" value="F:hydroxyacylglutathione hydrolase activity"/>
    <property type="evidence" value="ECO:0007669"/>
    <property type="project" value="UniProtKB-UniRule"/>
</dbReference>
<dbReference type="GO" id="GO:0046872">
    <property type="term" value="F:metal ion binding"/>
    <property type="evidence" value="ECO:0007669"/>
    <property type="project" value="UniProtKB-KW"/>
</dbReference>
<dbReference type="GO" id="GO:0019243">
    <property type="term" value="P:methylglyoxal catabolic process to D-lactate via S-lactoyl-glutathione"/>
    <property type="evidence" value="ECO:0007669"/>
    <property type="project" value="InterPro"/>
</dbReference>
<dbReference type="CDD" id="cd07723">
    <property type="entry name" value="hydroxyacylglutathione_hydrolase_MBL-fold"/>
    <property type="match status" value="1"/>
</dbReference>
<dbReference type="Gene3D" id="3.60.15.10">
    <property type="entry name" value="Ribonuclease Z/Hydroxyacylglutathione hydrolase-like"/>
    <property type="match status" value="1"/>
</dbReference>
<dbReference type="HAMAP" id="MF_01374">
    <property type="entry name" value="Glyoxalase_2"/>
    <property type="match status" value="1"/>
</dbReference>
<dbReference type="InterPro" id="IPR035680">
    <property type="entry name" value="Clx_II_MBL"/>
</dbReference>
<dbReference type="InterPro" id="IPR050110">
    <property type="entry name" value="Glyoxalase_II_hydrolase"/>
</dbReference>
<dbReference type="InterPro" id="IPR032282">
    <property type="entry name" value="HAGH_C"/>
</dbReference>
<dbReference type="InterPro" id="IPR017782">
    <property type="entry name" value="Hydroxyacylglutathione_Hdrlase"/>
</dbReference>
<dbReference type="InterPro" id="IPR001279">
    <property type="entry name" value="Metallo-B-lactamas"/>
</dbReference>
<dbReference type="InterPro" id="IPR036866">
    <property type="entry name" value="RibonucZ/Hydroxyglut_hydro"/>
</dbReference>
<dbReference type="NCBIfam" id="TIGR03413">
    <property type="entry name" value="GSH_gloB"/>
    <property type="match status" value="1"/>
</dbReference>
<dbReference type="PANTHER" id="PTHR43705">
    <property type="entry name" value="HYDROXYACYLGLUTATHIONE HYDROLASE"/>
    <property type="match status" value="1"/>
</dbReference>
<dbReference type="PANTHER" id="PTHR43705:SF1">
    <property type="entry name" value="HYDROXYACYLGLUTATHIONE HYDROLASE GLOB"/>
    <property type="match status" value="1"/>
</dbReference>
<dbReference type="Pfam" id="PF16123">
    <property type="entry name" value="HAGH_C"/>
    <property type="match status" value="1"/>
</dbReference>
<dbReference type="Pfam" id="PF00753">
    <property type="entry name" value="Lactamase_B"/>
    <property type="match status" value="1"/>
</dbReference>
<dbReference type="PIRSF" id="PIRSF005457">
    <property type="entry name" value="Glx"/>
    <property type="match status" value="1"/>
</dbReference>
<dbReference type="SMART" id="SM00849">
    <property type="entry name" value="Lactamase_B"/>
    <property type="match status" value="1"/>
</dbReference>
<dbReference type="SUPFAM" id="SSF56281">
    <property type="entry name" value="Metallo-hydrolase/oxidoreductase"/>
    <property type="match status" value="1"/>
</dbReference>
<name>GLO2_XANC8</name>
<sequence length="255" mass="27588">MRLTALPAFDDNYIWALVANDGRAVIVDPGQAAPVLEAAQREGFTPVAALLTHHHADHIGGVAELQQHFPALELYGPDDERMPSATRHVAHGDTVTALGIDFAVLEVPGHTRSHVAYVGDGHLFSGDTLFSLGCGRMFEGTPPQMFDALQRLASLPGETLVCCGHEYTLANAAFALHVDPTNAALQRRQQEAQAMRHAARPTLPISLKSELATNPFLRLHTPEIRAAAAAHASISITSDVDVFAELRRWKDAFRA</sequence>
<protein>
    <recommendedName>
        <fullName evidence="1">Hydroxyacylglutathione hydrolase</fullName>
        <ecNumber evidence="1">3.1.2.6</ecNumber>
    </recommendedName>
    <alternativeName>
        <fullName evidence="1">Glyoxalase II</fullName>
        <shortName evidence="1">Glx II</shortName>
    </alternativeName>
</protein>
<comment type="function">
    <text evidence="1">Thiolesterase that catalyzes the hydrolysis of S-D-lactoyl-glutathione to form glutathione and D-lactic acid.</text>
</comment>
<comment type="catalytic activity">
    <reaction evidence="1">
        <text>an S-(2-hydroxyacyl)glutathione + H2O = a 2-hydroxy carboxylate + glutathione + H(+)</text>
        <dbReference type="Rhea" id="RHEA:21864"/>
        <dbReference type="ChEBI" id="CHEBI:15377"/>
        <dbReference type="ChEBI" id="CHEBI:15378"/>
        <dbReference type="ChEBI" id="CHEBI:57925"/>
        <dbReference type="ChEBI" id="CHEBI:58896"/>
        <dbReference type="ChEBI" id="CHEBI:71261"/>
        <dbReference type="EC" id="3.1.2.6"/>
    </reaction>
</comment>
<comment type="cofactor">
    <cofactor evidence="1">
        <name>Zn(2+)</name>
        <dbReference type="ChEBI" id="CHEBI:29105"/>
    </cofactor>
    <text evidence="1">Binds 2 Zn(2+) ions per subunit.</text>
</comment>
<comment type="pathway">
    <text evidence="1">Secondary metabolite metabolism; methylglyoxal degradation; (R)-lactate from methylglyoxal: step 2/2.</text>
</comment>
<comment type="subunit">
    <text evidence="1">Monomer.</text>
</comment>
<comment type="similarity">
    <text evidence="1">Belongs to the metallo-beta-lactamase superfamily. Glyoxalase II family.</text>
</comment>
<gene>
    <name evidence="1" type="primary">gloB</name>
    <name type="ordered locus">XC_3258</name>
</gene>
<organism>
    <name type="scientific">Xanthomonas campestris pv. campestris (strain 8004)</name>
    <dbReference type="NCBI Taxonomy" id="314565"/>
    <lineage>
        <taxon>Bacteria</taxon>
        <taxon>Pseudomonadati</taxon>
        <taxon>Pseudomonadota</taxon>
        <taxon>Gammaproteobacteria</taxon>
        <taxon>Lysobacterales</taxon>
        <taxon>Lysobacteraceae</taxon>
        <taxon>Xanthomonas</taxon>
    </lineage>
</organism>
<reference key="1">
    <citation type="journal article" date="2005" name="Genome Res.">
        <title>Comparative and functional genomic analyses of the pathogenicity of phytopathogen Xanthomonas campestris pv. campestris.</title>
        <authorList>
            <person name="Qian W."/>
            <person name="Jia Y."/>
            <person name="Ren S.-X."/>
            <person name="He Y.-Q."/>
            <person name="Feng J.-X."/>
            <person name="Lu L.-F."/>
            <person name="Sun Q."/>
            <person name="Ying G."/>
            <person name="Tang D.-J."/>
            <person name="Tang H."/>
            <person name="Wu W."/>
            <person name="Hao P."/>
            <person name="Wang L."/>
            <person name="Jiang B.-L."/>
            <person name="Zeng S."/>
            <person name="Gu W.-Y."/>
            <person name="Lu G."/>
            <person name="Rong L."/>
            <person name="Tian Y."/>
            <person name="Yao Z."/>
            <person name="Fu G."/>
            <person name="Chen B."/>
            <person name="Fang R."/>
            <person name="Qiang B."/>
            <person name="Chen Z."/>
            <person name="Zhao G.-P."/>
            <person name="Tang J.-L."/>
            <person name="He C."/>
        </authorList>
    </citation>
    <scope>NUCLEOTIDE SEQUENCE [LARGE SCALE GENOMIC DNA]</scope>
    <source>
        <strain>8004</strain>
    </source>
</reference>
<accession>Q4URM1</accession>
<proteinExistence type="inferred from homology"/>
<evidence type="ECO:0000255" key="1">
    <source>
        <dbReference type="HAMAP-Rule" id="MF_01374"/>
    </source>
</evidence>
<feature type="chain" id="PRO_1000068231" description="Hydroxyacylglutathione hydrolase">
    <location>
        <begin position="1"/>
        <end position="255"/>
    </location>
</feature>
<feature type="binding site" evidence="1">
    <location>
        <position position="53"/>
    </location>
    <ligand>
        <name>Zn(2+)</name>
        <dbReference type="ChEBI" id="CHEBI:29105"/>
        <label>1</label>
    </ligand>
</feature>
<feature type="binding site" evidence="1">
    <location>
        <position position="55"/>
    </location>
    <ligand>
        <name>Zn(2+)</name>
        <dbReference type="ChEBI" id="CHEBI:29105"/>
        <label>1</label>
    </ligand>
</feature>
<feature type="binding site" evidence="1">
    <location>
        <position position="57"/>
    </location>
    <ligand>
        <name>Zn(2+)</name>
        <dbReference type="ChEBI" id="CHEBI:29105"/>
        <label>2</label>
    </ligand>
</feature>
<feature type="binding site" evidence="1">
    <location>
        <position position="58"/>
    </location>
    <ligand>
        <name>Zn(2+)</name>
        <dbReference type="ChEBI" id="CHEBI:29105"/>
        <label>2</label>
    </ligand>
</feature>
<feature type="binding site" evidence="1">
    <location>
        <position position="110"/>
    </location>
    <ligand>
        <name>Zn(2+)</name>
        <dbReference type="ChEBI" id="CHEBI:29105"/>
        <label>1</label>
    </ligand>
</feature>
<feature type="binding site" evidence="1">
    <location>
        <position position="127"/>
    </location>
    <ligand>
        <name>Zn(2+)</name>
        <dbReference type="ChEBI" id="CHEBI:29105"/>
        <label>1</label>
    </ligand>
</feature>
<feature type="binding site" evidence="1">
    <location>
        <position position="127"/>
    </location>
    <ligand>
        <name>Zn(2+)</name>
        <dbReference type="ChEBI" id="CHEBI:29105"/>
        <label>2</label>
    </ligand>
</feature>
<feature type="binding site" evidence="1">
    <location>
        <position position="165"/>
    </location>
    <ligand>
        <name>Zn(2+)</name>
        <dbReference type="ChEBI" id="CHEBI:29105"/>
        <label>2</label>
    </ligand>
</feature>
<keyword id="KW-0378">Hydrolase</keyword>
<keyword id="KW-0479">Metal-binding</keyword>
<keyword id="KW-0862">Zinc</keyword>